<protein>
    <recommendedName>
        <fullName>Ubiquitin-like protein atg12</fullName>
    </recommendedName>
    <alternativeName>
        <fullName>Autophagy-related protein 12</fullName>
    </alternativeName>
</protein>
<organism>
    <name type="scientific">Neurospora crassa (strain ATCC 24698 / 74-OR23-1A / CBS 708.71 / DSM 1257 / FGSC 987)</name>
    <dbReference type="NCBI Taxonomy" id="367110"/>
    <lineage>
        <taxon>Eukaryota</taxon>
        <taxon>Fungi</taxon>
        <taxon>Dikarya</taxon>
        <taxon>Ascomycota</taxon>
        <taxon>Pezizomycotina</taxon>
        <taxon>Sordariomycetes</taxon>
        <taxon>Sordariomycetidae</taxon>
        <taxon>Sordariales</taxon>
        <taxon>Sordariaceae</taxon>
        <taxon>Neurospora</taxon>
    </lineage>
</organism>
<comment type="function">
    <text evidence="1">Ubiquitin-like protein involved in cytoplasm to vacuole transport (Cvt), autophagy vesicles formation, mitophagy, and nucleophagy. Conjugation with apg-4/atg5 through a ubiquitin-like conjugating system involving also apg-5/atg7 as an E1-like activating enzyme and atg10 as an E2-like conjugating enzyme, is essential for its function. The atg12-apg-4/atg5 conjugate functions as an E3-like enzyme which is required for lipidation of apg-6/atg8 and apg-6/atg8 association to the vesicle membranes (By similarity).</text>
</comment>
<comment type="subunit">
    <text evidence="1">Forms a conjugate with apg-4/atg5.</text>
</comment>
<comment type="subcellular location">
    <subcellularLocation>
        <location evidence="1">Preautophagosomal structure membrane</location>
        <topology evidence="1">Peripheral membrane protein</topology>
    </subcellularLocation>
</comment>
<comment type="similarity">
    <text evidence="3">Belongs to the ATG12 family.</text>
</comment>
<sequence>MASSQPLHGTASPSLVHDDNNPNSSTASPVLEGRDSPNLPLTMTASTVLMTLPRDATAALAEAGTFDQEKVVIRFKPVGSAPALRREQVKVLSTHSFETVVAYLRKTLKVQETDSVFLYVNSVFAPALDEVVGNLWRCFKDSTNQLNVSYSMTPSFG</sequence>
<accession>Q7S083</accession>
<dbReference type="EMBL" id="CM002241">
    <property type="protein sequence ID" value="EAA28720.3"/>
    <property type="molecule type" value="Genomic_DNA"/>
</dbReference>
<dbReference type="RefSeq" id="XP_957956.3">
    <property type="nucleotide sequence ID" value="XM_952863.3"/>
</dbReference>
<dbReference type="SMR" id="Q7S083"/>
<dbReference type="STRING" id="367110.Q7S083"/>
<dbReference type="EnsemblFungi" id="EAA28720">
    <property type="protein sequence ID" value="EAA28720"/>
    <property type="gene ID" value="NCU10049"/>
</dbReference>
<dbReference type="GeneID" id="3874103"/>
<dbReference type="KEGG" id="ncr:NCU10049"/>
<dbReference type="VEuPathDB" id="FungiDB:NCU10049"/>
<dbReference type="HOGENOM" id="CLU_106795_1_1_1"/>
<dbReference type="InParanoid" id="Q7S083"/>
<dbReference type="OrthoDB" id="10003551at2759"/>
<dbReference type="Proteomes" id="UP000001805">
    <property type="component" value="Chromosome 5, Linkage Group VI"/>
</dbReference>
<dbReference type="GO" id="GO:0034274">
    <property type="term" value="C:Atg12-Atg5-Atg16 complex"/>
    <property type="evidence" value="ECO:0000318"/>
    <property type="project" value="GO_Central"/>
</dbReference>
<dbReference type="GO" id="GO:0000421">
    <property type="term" value="C:autophagosome membrane"/>
    <property type="evidence" value="ECO:0000318"/>
    <property type="project" value="GO_Central"/>
</dbReference>
<dbReference type="GO" id="GO:0034045">
    <property type="term" value="C:phagophore assembly site membrane"/>
    <property type="evidence" value="ECO:0000318"/>
    <property type="project" value="GO_Central"/>
</dbReference>
<dbReference type="GO" id="GO:0031386">
    <property type="term" value="F:protein tag activity"/>
    <property type="evidence" value="ECO:0000318"/>
    <property type="project" value="GO_Central"/>
</dbReference>
<dbReference type="GO" id="GO:0000045">
    <property type="term" value="P:autophagosome assembly"/>
    <property type="evidence" value="ECO:0000318"/>
    <property type="project" value="GO_Central"/>
</dbReference>
<dbReference type="GO" id="GO:0097352">
    <property type="term" value="P:autophagosome maturation"/>
    <property type="evidence" value="ECO:0000318"/>
    <property type="project" value="GO_Central"/>
</dbReference>
<dbReference type="GO" id="GO:0000422">
    <property type="term" value="P:autophagy of mitochondrion"/>
    <property type="evidence" value="ECO:0000318"/>
    <property type="project" value="GO_Central"/>
</dbReference>
<dbReference type="GO" id="GO:0061723">
    <property type="term" value="P:glycophagy"/>
    <property type="evidence" value="ECO:0000318"/>
    <property type="project" value="GO_Central"/>
</dbReference>
<dbReference type="GO" id="GO:0034727">
    <property type="term" value="P:piecemeal microautophagy of the nucleus"/>
    <property type="evidence" value="ECO:0000318"/>
    <property type="project" value="GO_Central"/>
</dbReference>
<dbReference type="GO" id="GO:0015031">
    <property type="term" value="P:protein transport"/>
    <property type="evidence" value="ECO:0007669"/>
    <property type="project" value="UniProtKB-KW"/>
</dbReference>
<dbReference type="CDD" id="cd01612">
    <property type="entry name" value="Ubl_ATG12"/>
    <property type="match status" value="1"/>
</dbReference>
<dbReference type="FunFam" id="3.10.20.90:FF:000148">
    <property type="entry name" value="Ubiquitin-like protein ATG12"/>
    <property type="match status" value="1"/>
</dbReference>
<dbReference type="Gene3D" id="3.10.20.90">
    <property type="entry name" value="Phosphatidylinositol 3-kinase Catalytic Subunit, Chain A, domain 1"/>
    <property type="match status" value="1"/>
</dbReference>
<dbReference type="InterPro" id="IPR007242">
    <property type="entry name" value="Atg12"/>
</dbReference>
<dbReference type="InterPro" id="IPR029071">
    <property type="entry name" value="Ubiquitin-like_domsf"/>
</dbReference>
<dbReference type="PANTHER" id="PTHR13385">
    <property type="entry name" value="AUTOPHAGY PROTEIN 12"/>
    <property type="match status" value="1"/>
</dbReference>
<dbReference type="PANTHER" id="PTHR13385:SF0">
    <property type="entry name" value="UBIQUITIN-LIKE PROTEIN ATG12"/>
    <property type="match status" value="1"/>
</dbReference>
<dbReference type="Pfam" id="PF04110">
    <property type="entry name" value="APG12"/>
    <property type="match status" value="1"/>
</dbReference>
<dbReference type="SUPFAM" id="SSF54236">
    <property type="entry name" value="Ubiquitin-like"/>
    <property type="match status" value="1"/>
</dbReference>
<reference key="1">
    <citation type="journal article" date="2003" name="Nature">
        <title>The genome sequence of the filamentous fungus Neurospora crassa.</title>
        <authorList>
            <person name="Galagan J.E."/>
            <person name="Calvo S.E."/>
            <person name="Borkovich K.A."/>
            <person name="Selker E.U."/>
            <person name="Read N.D."/>
            <person name="Jaffe D.B."/>
            <person name="FitzHugh W."/>
            <person name="Ma L.-J."/>
            <person name="Smirnov S."/>
            <person name="Purcell S."/>
            <person name="Rehman B."/>
            <person name="Elkins T."/>
            <person name="Engels R."/>
            <person name="Wang S."/>
            <person name="Nielsen C.B."/>
            <person name="Butler J."/>
            <person name="Endrizzi M."/>
            <person name="Qui D."/>
            <person name="Ianakiev P."/>
            <person name="Bell-Pedersen D."/>
            <person name="Nelson M.A."/>
            <person name="Werner-Washburne M."/>
            <person name="Selitrennikoff C.P."/>
            <person name="Kinsey J.A."/>
            <person name="Braun E.L."/>
            <person name="Zelter A."/>
            <person name="Schulte U."/>
            <person name="Kothe G.O."/>
            <person name="Jedd G."/>
            <person name="Mewes H.-W."/>
            <person name="Staben C."/>
            <person name="Marcotte E."/>
            <person name="Greenberg D."/>
            <person name="Roy A."/>
            <person name="Foley K."/>
            <person name="Naylor J."/>
            <person name="Stange-Thomann N."/>
            <person name="Barrett R."/>
            <person name="Gnerre S."/>
            <person name="Kamal M."/>
            <person name="Kamvysselis M."/>
            <person name="Mauceli E.W."/>
            <person name="Bielke C."/>
            <person name="Rudd S."/>
            <person name="Frishman D."/>
            <person name="Krystofova S."/>
            <person name="Rasmussen C."/>
            <person name="Metzenberg R.L."/>
            <person name="Perkins D.D."/>
            <person name="Kroken S."/>
            <person name="Cogoni C."/>
            <person name="Macino G."/>
            <person name="Catcheside D.E.A."/>
            <person name="Li W."/>
            <person name="Pratt R.J."/>
            <person name="Osmani S.A."/>
            <person name="DeSouza C.P.C."/>
            <person name="Glass N.L."/>
            <person name="Orbach M.J."/>
            <person name="Berglund J.A."/>
            <person name="Voelker R."/>
            <person name="Yarden O."/>
            <person name="Plamann M."/>
            <person name="Seiler S."/>
            <person name="Dunlap J.C."/>
            <person name="Radford A."/>
            <person name="Aramayo R."/>
            <person name="Natvig D.O."/>
            <person name="Alex L.A."/>
            <person name="Mannhaupt G."/>
            <person name="Ebbole D.J."/>
            <person name="Freitag M."/>
            <person name="Paulsen I."/>
            <person name="Sachs M.S."/>
            <person name="Lander E.S."/>
            <person name="Nusbaum C."/>
            <person name="Birren B.W."/>
        </authorList>
    </citation>
    <scope>NUCLEOTIDE SEQUENCE [LARGE SCALE GENOMIC DNA]</scope>
    <source>
        <strain>ATCC 24698 / 74-OR23-1A / CBS 708.71 / DSM 1257 / FGSC 987</strain>
    </source>
</reference>
<proteinExistence type="inferred from homology"/>
<feature type="chain" id="PRO_0000212482" description="Ubiquitin-like protein atg12">
    <location>
        <begin position="1"/>
        <end position="157"/>
    </location>
</feature>
<feature type="region of interest" description="Disordered" evidence="2">
    <location>
        <begin position="1"/>
        <end position="38"/>
    </location>
</feature>
<feature type="compositionally biased region" description="Polar residues" evidence="2">
    <location>
        <begin position="1"/>
        <end position="13"/>
    </location>
</feature>
<feature type="cross-link" description="Glycyl lysine isopeptide (Gly-Lys) (interchain with K-263 in ATG5)" evidence="1">
    <location>
        <position position="157"/>
    </location>
</feature>
<gene>
    <name type="primary">atg12</name>
    <name type="ORF">NCU10049</name>
</gene>
<evidence type="ECO:0000250" key="1"/>
<evidence type="ECO:0000256" key="2">
    <source>
        <dbReference type="SAM" id="MobiDB-lite"/>
    </source>
</evidence>
<evidence type="ECO:0000305" key="3"/>
<keyword id="KW-0072">Autophagy</keyword>
<keyword id="KW-1017">Isopeptide bond</keyword>
<keyword id="KW-0472">Membrane</keyword>
<keyword id="KW-0653">Protein transport</keyword>
<keyword id="KW-1185">Reference proteome</keyword>
<keyword id="KW-0813">Transport</keyword>
<keyword id="KW-0833">Ubl conjugation pathway</keyword>
<name>ATG12_NEUCR</name>